<name>Y4148_CUPNH</name>
<sequence>MPFEFIDAAHAGQAGSDPLQDELALLDLAAQGRQVAQLWEAPLSLVVPRTYLRHAALETARADFAQQGCPVFLRMSGGGLVPQGPGILNLSLAYTVEQPPGARSDAVYLHLCEVIGDALQSLGVDTHWQAVAGSFCDGRYNLAWGPPEAARKIAGTAQYWRRAPAAMQTADGQRHLVLAHAVLLVSAGPVQINARANAFEAAIDSGRHYDAGKVVSVREALLASGRAVDDDAALMAQVSDALRRSVGQTPPPA</sequence>
<keyword id="KW-1185">Reference proteome</keyword>
<dbReference type="EMBL" id="AM260480">
    <property type="protein sequence ID" value="CAJ94954.1"/>
    <property type="molecule type" value="Genomic_DNA"/>
</dbReference>
<dbReference type="EMBL" id="M66060">
    <property type="protein sequence ID" value="AAA21952.1"/>
    <property type="status" value="ALT_INIT"/>
    <property type="molecule type" value="Genomic_DNA"/>
</dbReference>
<dbReference type="RefSeq" id="WP_011616380.1">
    <property type="nucleotide sequence ID" value="NC_008314.1"/>
</dbReference>
<dbReference type="SMR" id="P27750"/>
<dbReference type="STRING" id="381666.H16_B0148"/>
<dbReference type="KEGG" id="reh:H16_B0148"/>
<dbReference type="eggNOG" id="COG0095">
    <property type="taxonomic scope" value="Bacteria"/>
</dbReference>
<dbReference type="HOGENOM" id="CLU_084176_0_0_4"/>
<dbReference type="OrthoDB" id="7364083at2"/>
<dbReference type="Proteomes" id="UP000008210">
    <property type="component" value="Chromosome 2"/>
</dbReference>
<dbReference type="GO" id="GO:0036211">
    <property type="term" value="P:protein modification process"/>
    <property type="evidence" value="ECO:0007669"/>
    <property type="project" value="InterPro"/>
</dbReference>
<dbReference type="CDD" id="cd16443">
    <property type="entry name" value="LplA"/>
    <property type="match status" value="1"/>
</dbReference>
<dbReference type="Gene3D" id="3.30.930.10">
    <property type="entry name" value="Bira Bifunctional Protein, Domain 2"/>
    <property type="match status" value="1"/>
</dbReference>
<dbReference type="InterPro" id="IPR045864">
    <property type="entry name" value="aa-tRNA-synth_II/BPL/LPL"/>
</dbReference>
<dbReference type="InterPro" id="IPR004143">
    <property type="entry name" value="BPL_LPL_catalytic"/>
</dbReference>
<dbReference type="InterPro" id="IPR050664">
    <property type="entry name" value="Octanoyltrans_LipM/LipL"/>
</dbReference>
<dbReference type="PANTHER" id="PTHR43679:SF2">
    <property type="entry name" value="OCTANOYL-[GCVH]:PROTEIN N-OCTANOYLTRANSFERASE"/>
    <property type="match status" value="1"/>
</dbReference>
<dbReference type="PANTHER" id="PTHR43679">
    <property type="entry name" value="OCTANOYLTRANSFERASE LIPM-RELATED"/>
    <property type="match status" value="1"/>
</dbReference>
<dbReference type="Pfam" id="PF21948">
    <property type="entry name" value="LplA-B_cat"/>
    <property type="match status" value="1"/>
</dbReference>
<dbReference type="SUPFAM" id="SSF55681">
    <property type="entry name" value="Class II aaRS and biotin synthetases"/>
    <property type="match status" value="1"/>
</dbReference>
<dbReference type="PROSITE" id="PS51733">
    <property type="entry name" value="BPL_LPL_CATALYTIC"/>
    <property type="match status" value="1"/>
</dbReference>
<feature type="chain" id="PRO_0000066108" description="Uncharacterized protein H16_B0148">
    <location>
        <begin position="1"/>
        <end position="253"/>
    </location>
</feature>
<feature type="domain" description="BPL/LPL catalytic" evidence="1">
    <location>
        <begin position="30"/>
        <end position="236"/>
    </location>
</feature>
<feature type="sequence conflict" description="In Ref. 2; AAA21952." evidence="2" ref="2">
    <original>VP</original>
    <variation>GA</variation>
    <location>
        <begin position="47"/>
        <end position="48"/>
    </location>
</feature>
<comment type="sequence caution" evidence="2">
    <conflict type="erroneous initiation">
        <sequence resource="EMBL-CDS" id="AAA21952"/>
    </conflict>
</comment>
<gene>
    <name type="ordered locus">H16_B0148</name>
</gene>
<proteinExistence type="predicted"/>
<evidence type="ECO:0000255" key="1">
    <source>
        <dbReference type="PROSITE-ProRule" id="PRU01067"/>
    </source>
</evidence>
<evidence type="ECO:0000305" key="2"/>
<accession>P27750</accession>
<accession>Q0K4X0</accession>
<organism>
    <name type="scientific">Cupriavidus necator (strain ATCC 17699 / DSM 428 / KCTC 22496 / NCIMB 10442 / H16 / Stanier 337)</name>
    <name type="common">Ralstonia eutropha</name>
    <dbReference type="NCBI Taxonomy" id="381666"/>
    <lineage>
        <taxon>Bacteria</taxon>
        <taxon>Pseudomonadati</taxon>
        <taxon>Pseudomonadota</taxon>
        <taxon>Betaproteobacteria</taxon>
        <taxon>Burkholderiales</taxon>
        <taxon>Burkholderiaceae</taxon>
        <taxon>Cupriavidus</taxon>
    </lineage>
</organism>
<reference key="1">
    <citation type="journal article" date="2006" name="Nat. Biotechnol.">
        <title>Genome sequence of the bioplastic-producing 'Knallgas' bacterium Ralstonia eutropha H16.</title>
        <authorList>
            <person name="Pohlmann A."/>
            <person name="Fricke W.F."/>
            <person name="Reinecke F."/>
            <person name="Kusian B."/>
            <person name="Liesegang H."/>
            <person name="Cramm R."/>
            <person name="Eitinger T."/>
            <person name="Ewering C."/>
            <person name="Poetter M."/>
            <person name="Schwartz E."/>
            <person name="Strittmatter A."/>
            <person name="Voss I."/>
            <person name="Gottschalk G."/>
            <person name="Steinbuechel A."/>
            <person name="Friedrich B."/>
            <person name="Bowien B."/>
        </authorList>
    </citation>
    <scope>NUCLEOTIDE SEQUENCE [LARGE SCALE GENOMIC DNA]</scope>
    <source>
        <strain>ATCC 17699 / DSM 428 / KCTC 22496 / NCIMB 10442 / H16 / Stanier 337</strain>
    </source>
</reference>
<reference key="2">
    <citation type="journal article" date="1991" name="J. Bacteriol.">
        <title>Identification and molecular characterization of the Alcaligenes eutrophus H16 aco operon genes involved in acetoin catabolism.</title>
        <authorList>
            <person name="Priefert H."/>
            <person name="Hein S."/>
            <person name="Krueger N."/>
            <person name="Zeh K."/>
            <person name="Schmidt B."/>
            <person name="Steinbuechel A."/>
        </authorList>
    </citation>
    <scope>NUCLEOTIDE SEQUENCE [GENOMIC DNA] OF 1-125</scope>
</reference>
<protein>
    <recommendedName>
        <fullName>Uncharacterized protein H16_B0148</fullName>
    </recommendedName>
    <alternativeName>
        <fullName>ORF 8</fullName>
    </alternativeName>
</protein>